<feature type="chain" id="PRO_0000332967" description="Dipeptidyl peptidase 3">
    <location>
        <begin position="1"/>
        <end position="691"/>
    </location>
</feature>
<feature type="active site" evidence="2">
    <location>
        <position position="432"/>
    </location>
</feature>
<feature type="binding site" evidence="3">
    <location>
        <position position="431"/>
    </location>
    <ligand>
        <name>Zn(2+)</name>
        <dbReference type="ChEBI" id="CHEBI:29105"/>
        <note>catalytic</note>
    </ligand>
</feature>
<feature type="binding site" evidence="3">
    <location>
        <position position="436"/>
    </location>
    <ligand>
        <name>Zn(2+)</name>
        <dbReference type="ChEBI" id="CHEBI:29105"/>
        <note>catalytic</note>
    </ligand>
</feature>
<feature type="binding site" evidence="3">
    <location>
        <position position="492"/>
    </location>
    <ligand>
        <name>Zn(2+)</name>
        <dbReference type="ChEBI" id="CHEBI:29105"/>
        <note>catalytic</note>
    </ligand>
</feature>
<accession>Q557H1</accession>
<accession>Q8T1P0</accession>
<reference key="1">
    <citation type="journal article" date="2002" name="Nature">
        <title>Sequence and analysis of chromosome 2 of Dictyostelium discoideum.</title>
        <authorList>
            <person name="Gloeckner G."/>
            <person name="Eichinger L."/>
            <person name="Szafranski K."/>
            <person name="Pachebat J.A."/>
            <person name="Bankier A.T."/>
            <person name="Dear P.H."/>
            <person name="Lehmann R."/>
            <person name="Baumgart C."/>
            <person name="Parra G."/>
            <person name="Abril J.F."/>
            <person name="Guigo R."/>
            <person name="Kumpf K."/>
            <person name="Tunggal B."/>
            <person name="Cox E.C."/>
            <person name="Quail M.A."/>
            <person name="Platzer M."/>
            <person name="Rosenthal A."/>
            <person name="Noegel A.A."/>
        </authorList>
    </citation>
    <scope>NUCLEOTIDE SEQUENCE [LARGE SCALE GENOMIC DNA]</scope>
    <source>
        <strain>AX4</strain>
    </source>
</reference>
<reference key="2">
    <citation type="journal article" date="2005" name="Nature">
        <title>The genome of the social amoeba Dictyostelium discoideum.</title>
        <authorList>
            <person name="Eichinger L."/>
            <person name="Pachebat J.A."/>
            <person name="Gloeckner G."/>
            <person name="Rajandream M.A."/>
            <person name="Sucgang R."/>
            <person name="Berriman M."/>
            <person name="Song J."/>
            <person name="Olsen R."/>
            <person name="Szafranski K."/>
            <person name="Xu Q."/>
            <person name="Tunggal B."/>
            <person name="Kummerfeld S."/>
            <person name="Madera M."/>
            <person name="Konfortov B.A."/>
            <person name="Rivero F."/>
            <person name="Bankier A.T."/>
            <person name="Lehmann R."/>
            <person name="Hamlin N."/>
            <person name="Davies R."/>
            <person name="Gaudet P."/>
            <person name="Fey P."/>
            <person name="Pilcher K."/>
            <person name="Chen G."/>
            <person name="Saunders D."/>
            <person name="Sodergren E.J."/>
            <person name="Davis P."/>
            <person name="Kerhornou A."/>
            <person name="Nie X."/>
            <person name="Hall N."/>
            <person name="Anjard C."/>
            <person name="Hemphill L."/>
            <person name="Bason N."/>
            <person name="Farbrother P."/>
            <person name="Desany B."/>
            <person name="Just E."/>
            <person name="Morio T."/>
            <person name="Rost R."/>
            <person name="Churcher C.M."/>
            <person name="Cooper J."/>
            <person name="Haydock S."/>
            <person name="van Driessche N."/>
            <person name="Cronin A."/>
            <person name="Goodhead I."/>
            <person name="Muzny D.M."/>
            <person name="Mourier T."/>
            <person name="Pain A."/>
            <person name="Lu M."/>
            <person name="Harper D."/>
            <person name="Lindsay R."/>
            <person name="Hauser H."/>
            <person name="James K.D."/>
            <person name="Quiles M."/>
            <person name="Madan Babu M."/>
            <person name="Saito T."/>
            <person name="Buchrieser C."/>
            <person name="Wardroper A."/>
            <person name="Felder M."/>
            <person name="Thangavelu M."/>
            <person name="Johnson D."/>
            <person name="Knights A."/>
            <person name="Loulseged H."/>
            <person name="Mungall K.L."/>
            <person name="Oliver K."/>
            <person name="Price C."/>
            <person name="Quail M.A."/>
            <person name="Urushihara H."/>
            <person name="Hernandez J."/>
            <person name="Rabbinowitsch E."/>
            <person name="Steffen D."/>
            <person name="Sanders M."/>
            <person name="Ma J."/>
            <person name="Kohara Y."/>
            <person name="Sharp S."/>
            <person name="Simmonds M.N."/>
            <person name="Spiegler S."/>
            <person name="Tivey A."/>
            <person name="Sugano S."/>
            <person name="White B."/>
            <person name="Walker D."/>
            <person name="Woodward J.R."/>
            <person name="Winckler T."/>
            <person name="Tanaka Y."/>
            <person name="Shaulsky G."/>
            <person name="Schleicher M."/>
            <person name="Weinstock G.M."/>
            <person name="Rosenthal A."/>
            <person name="Cox E.C."/>
            <person name="Chisholm R.L."/>
            <person name="Gibbs R.A."/>
            <person name="Loomis W.F."/>
            <person name="Platzer M."/>
            <person name="Kay R.R."/>
            <person name="Williams J.G."/>
            <person name="Dear P.H."/>
            <person name="Noegel A.A."/>
            <person name="Barrell B.G."/>
            <person name="Kuspa A."/>
        </authorList>
    </citation>
    <scope>NUCLEOTIDE SEQUENCE [LARGE SCALE GENOMIC DNA]</scope>
    <source>
        <strain>AX4</strain>
    </source>
</reference>
<name>DPP3_DICDI</name>
<comment type="catalytic activity">
    <reaction>
        <text>Release of an N-terminal dipeptide from a peptide comprising four or more residues, with broad specificity. Also acts on dipeptidyl 2-naphthylamides.</text>
        <dbReference type="EC" id="3.4.14.4"/>
    </reaction>
</comment>
<comment type="cofactor">
    <cofactor evidence="3">
        <name>Zn(2+)</name>
        <dbReference type="ChEBI" id="CHEBI:29105"/>
    </cofactor>
    <text evidence="3">Binds 1 zinc ion per subunit.</text>
</comment>
<comment type="subcellular location">
    <subcellularLocation>
        <location evidence="1">Cytoplasm</location>
    </subcellularLocation>
</comment>
<comment type="similarity">
    <text evidence="4">Belongs to the peptidase M49 family.</text>
</comment>
<comment type="caution">
    <text evidence="4">The gene for this protein is duplicated in strains AX3 and AX4. These strains contain a duplication of a segment of 750 kb of chromosome 2 compared to the corresponding sequence in strain AX2.</text>
</comment>
<proteinExistence type="inferred from homology"/>
<keyword id="KW-0031">Aminopeptidase</keyword>
<keyword id="KW-0963">Cytoplasm</keyword>
<keyword id="KW-0378">Hydrolase</keyword>
<keyword id="KW-0479">Metal-binding</keyword>
<keyword id="KW-0482">Metalloprotease</keyword>
<keyword id="KW-0645">Protease</keyword>
<keyword id="KW-1185">Reference proteome</keyword>
<keyword id="KW-0862">Zinc</keyword>
<evidence type="ECO:0000250" key="1"/>
<evidence type="ECO:0000250" key="2">
    <source>
        <dbReference type="UniProtKB" id="O55096"/>
    </source>
</evidence>
<evidence type="ECO:0000250" key="3">
    <source>
        <dbReference type="UniProtKB" id="Q9NY33"/>
    </source>
</evidence>
<evidence type="ECO:0000305" key="4"/>
<organism>
    <name type="scientific">Dictyostelium discoideum</name>
    <name type="common">Social amoeba</name>
    <dbReference type="NCBI Taxonomy" id="44689"/>
    <lineage>
        <taxon>Eukaryota</taxon>
        <taxon>Amoebozoa</taxon>
        <taxon>Evosea</taxon>
        <taxon>Eumycetozoa</taxon>
        <taxon>Dictyostelia</taxon>
        <taxon>Dictyosteliales</taxon>
        <taxon>Dictyosteliaceae</taxon>
        <taxon>Dictyostelium</taxon>
    </lineage>
</organism>
<gene>
    <name type="primary">dpp3-1</name>
    <name type="ORF">DDB_G0273471</name>
</gene>
<gene>
    <name type="primary">dpp3-2</name>
    <name type="ORF">DDB_G0273563</name>
</gene>
<dbReference type="EC" id="3.4.14.4"/>
<dbReference type="EMBL" id="AAFI02000010">
    <property type="protein sequence ID" value="EAL70690.1"/>
    <property type="molecule type" value="Genomic_DNA"/>
</dbReference>
<dbReference type="EMBL" id="AAFI02000010">
    <property type="protein sequence ID" value="EAL70736.1"/>
    <property type="molecule type" value="Genomic_DNA"/>
</dbReference>
<dbReference type="RefSeq" id="XP_644587.1">
    <property type="nucleotide sequence ID" value="XM_639495.1"/>
</dbReference>
<dbReference type="RefSeq" id="XP_644664.1">
    <property type="nucleotide sequence ID" value="XM_639572.1"/>
</dbReference>
<dbReference type="SMR" id="Q557H1"/>
<dbReference type="FunCoup" id="Q557H1">
    <property type="interactions" value="512"/>
</dbReference>
<dbReference type="STRING" id="44689.Q557H1"/>
<dbReference type="MEROPS" id="M49.A02"/>
<dbReference type="PaxDb" id="44689-DDB0266801"/>
<dbReference type="EnsemblProtists" id="EAL70690">
    <property type="protein sequence ID" value="EAL70690"/>
    <property type="gene ID" value="DDB_G0273563"/>
</dbReference>
<dbReference type="EnsemblProtists" id="EAL70736">
    <property type="protein sequence ID" value="EAL70736"/>
    <property type="gene ID" value="DDB_G0273471"/>
</dbReference>
<dbReference type="GeneID" id="8618951"/>
<dbReference type="GeneID" id="8619026"/>
<dbReference type="KEGG" id="ddi:DDB_G0273471"/>
<dbReference type="KEGG" id="ddi:DDB_G0273563"/>
<dbReference type="dictyBase" id="DDB_G0273471">
    <property type="gene designation" value="dpp3-1"/>
</dbReference>
<dbReference type="dictyBase" id="DDB_G0273563">
    <property type="gene designation" value="dpp3-2"/>
</dbReference>
<dbReference type="VEuPathDB" id="AmoebaDB:DDB_G0273471"/>
<dbReference type="eggNOG" id="KOG3675">
    <property type="taxonomic scope" value="Eukaryota"/>
</dbReference>
<dbReference type="HOGENOM" id="CLU_011977_1_0_1"/>
<dbReference type="InParanoid" id="Q557H1"/>
<dbReference type="OMA" id="QRYWIRD"/>
<dbReference type="PhylomeDB" id="Q557H1"/>
<dbReference type="PRO" id="PR:Q557H1"/>
<dbReference type="Proteomes" id="UP000002195">
    <property type="component" value="Chromosome 2"/>
</dbReference>
<dbReference type="GO" id="GO:0005737">
    <property type="term" value="C:cytoplasm"/>
    <property type="evidence" value="ECO:0000250"/>
    <property type="project" value="dictyBase"/>
</dbReference>
<dbReference type="GO" id="GO:0004177">
    <property type="term" value="F:aminopeptidase activity"/>
    <property type="evidence" value="ECO:0007669"/>
    <property type="project" value="UniProtKB-KW"/>
</dbReference>
<dbReference type="GO" id="GO:0008239">
    <property type="term" value="F:dipeptidyl-peptidase activity"/>
    <property type="evidence" value="ECO:0000250"/>
    <property type="project" value="dictyBase"/>
</dbReference>
<dbReference type="GO" id="GO:0046872">
    <property type="term" value="F:metal ion binding"/>
    <property type="evidence" value="ECO:0007669"/>
    <property type="project" value="UniProtKB-KW"/>
</dbReference>
<dbReference type="GO" id="GO:0008235">
    <property type="term" value="F:metalloexopeptidase activity"/>
    <property type="evidence" value="ECO:0007669"/>
    <property type="project" value="InterPro"/>
</dbReference>
<dbReference type="GO" id="GO:0006508">
    <property type="term" value="P:proteolysis"/>
    <property type="evidence" value="ECO:0000250"/>
    <property type="project" value="dictyBase"/>
</dbReference>
<dbReference type="FunFam" id="3.30.540.30:FF:000001">
    <property type="entry name" value="Dipeptidyl peptidase 3"/>
    <property type="match status" value="1"/>
</dbReference>
<dbReference type="FunFam" id="3.30.540.30:FF:000002">
    <property type="entry name" value="Dipeptidyl peptidase 3"/>
    <property type="match status" value="1"/>
</dbReference>
<dbReference type="Gene3D" id="3.30.540.30">
    <property type="match status" value="3"/>
</dbReference>
<dbReference type="InterPro" id="IPR005317">
    <property type="entry name" value="Dipeptidyl-peptase3"/>
</dbReference>
<dbReference type="InterPro" id="IPR039461">
    <property type="entry name" value="Peptidase_M49"/>
</dbReference>
<dbReference type="PANTHER" id="PTHR23422:SF11">
    <property type="entry name" value="DIPEPTIDYL PEPTIDASE 3"/>
    <property type="match status" value="1"/>
</dbReference>
<dbReference type="PANTHER" id="PTHR23422">
    <property type="entry name" value="DIPEPTIDYL PEPTIDASE III-RELATED"/>
    <property type="match status" value="1"/>
</dbReference>
<dbReference type="Pfam" id="PF03571">
    <property type="entry name" value="Peptidase_M49"/>
    <property type="match status" value="1"/>
</dbReference>
<dbReference type="PIRSF" id="PIRSF007828">
    <property type="entry name" value="Dipeptidyl-peptidase_III"/>
    <property type="match status" value="1"/>
</dbReference>
<sequence length="691" mass="78274">MSVPSSVIENHLVPKEIPVYRLNARESFNLLTEKEQLYAHHISVACWWGSKICLGQTSIESGPIFNLFQNLFSIQNLKSTVVPNIVSEEEYSDLLSYAATFYGNMGNYLSFGDSKFIPRISKEKLQLIINKVNDNKVNEYWGKCSELMYSLDKQVRELGIDGNGISTYYSPNITKVEIEKVQKFMDSKSISPYNTRLFKVSENNYNLLIASASTSTPTVSHQFDGYTINIVYGDWNKNLTKVVDNLKLALPYAANENQTNMLKKYIDSFYSGSIDDHKDSQRWWIKDISPAVETNIGFIESYRDPYGVRGEWEGFVSMVNKEMSLKFGKLTDNATTFLSKLPWDKSFEKEKFNKPDFTSLEVLTFATTGIPAGINLSNYDDIRQTEGFKNVSLGNVIAARKDEYVTFIQESDQKLFNELSTEAFELQVGIHELYGHGSGKLFTTDANGNVNFKVGEVINPLTNKPIDPKTEVYKFGETYDSVFKSLGSPMEECRAECCGIYLSPDEKILELFGFTDPKKAEDVYYVNWLIMARAGVCALEFYSPPSEGAPGKWRQAHMQARYCILTTFLRSGIVTLDKTADDVIVKLDKSKIRGIGVKAVGDFLNRLMVYKATANIDASIKLFDEYTHVNEEFLAIRDIVLAKKKPRKVFVQAHTYLNSNGKVCLQDFDDSTQGMIDSMITRFGKDDSDML</sequence>
<protein>
    <recommendedName>
        <fullName>Dipeptidyl peptidase 3</fullName>
        <ecNumber>3.4.14.4</ecNumber>
    </recommendedName>
    <alternativeName>
        <fullName>Dipeptidyl aminopeptidase III</fullName>
    </alternativeName>
    <alternativeName>
        <fullName>Dipeptidyl arylamidase III</fullName>
    </alternativeName>
    <alternativeName>
        <fullName>Dipeptidyl peptidase III</fullName>
        <shortName>DPP III</shortName>
    </alternativeName>
</protein>